<reference key="1">
    <citation type="journal article" date="2006" name="PLoS Genet.">
        <title>The complete genome sequence and comparative genome analysis of the high pathogenicity Yersinia enterocolitica strain 8081.</title>
        <authorList>
            <person name="Thomson N.R."/>
            <person name="Howard S."/>
            <person name="Wren B.W."/>
            <person name="Holden M.T.G."/>
            <person name="Crossman L."/>
            <person name="Challis G.L."/>
            <person name="Churcher C."/>
            <person name="Mungall K."/>
            <person name="Brooks K."/>
            <person name="Chillingworth T."/>
            <person name="Feltwell T."/>
            <person name="Abdellah Z."/>
            <person name="Hauser H."/>
            <person name="Jagels K."/>
            <person name="Maddison M."/>
            <person name="Moule S."/>
            <person name="Sanders M."/>
            <person name="Whitehead S."/>
            <person name="Quail M.A."/>
            <person name="Dougan G."/>
            <person name="Parkhill J."/>
            <person name="Prentice M.B."/>
        </authorList>
    </citation>
    <scope>NUCLEOTIDE SEQUENCE [LARGE SCALE GENOMIC DNA]</scope>
    <source>
        <strain>NCTC 13174 / 8081</strain>
    </source>
</reference>
<comment type="function">
    <text evidence="1">Part of the ABC transporter complex ZnuABC involved in zinc import. Responsible for energy coupling to the transport system.</text>
</comment>
<comment type="catalytic activity">
    <reaction evidence="1">
        <text>Zn(2+)(out) + ATP(in) + H2O(in) = Zn(2+)(in) + ADP(in) + phosphate(in) + H(+)(in)</text>
        <dbReference type="Rhea" id="RHEA:29795"/>
        <dbReference type="ChEBI" id="CHEBI:15377"/>
        <dbReference type="ChEBI" id="CHEBI:15378"/>
        <dbReference type="ChEBI" id="CHEBI:29105"/>
        <dbReference type="ChEBI" id="CHEBI:30616"/>
        <dbReference type="ChEBI" id="CHEBI:43474"/>
        <dbReference type="ChEBI" id="CHEBI:456216"/>
        <dbReference type="EC" id="7.2.2.20"/>
    </reaction>
</comment>
<comment type="subunit">
    <text evidence="1">The complex is composed of two ATP-binding proteins (ZnuC), two transmembrane proteins (ZnuB) and a solute-binding protein (ZnuA).</text>
</comment>
<comment type="subcellular location">
    <subcellularLocation>
        <location evidence="1">Cell inner membrane</location>
        <topology evidence="1">Peripheral membrane protein</topology>
    </subcellularLocation>
</comment>
<comment type="similarity">
    <text evidence="1">Belongs to the ABC transporter superfamily. Zinc importer (TC 3.A.1.15.5) family.</text>
</comment>
<proteinExistence type="inferred from homology"/>
<gene>
    <name evidence="1" type="primary">znuC</name>
    <name type="ordered locus">YE2389</name>
</gene>
<dbReference type="EC" id="7.2.2.20" evidence="1"/>
<dbReference type="EMBL" id="AM286415">
    <property type="protein sequence ID" value="CAL12441.1"/>
    <property type="molecule type" value="Genomic_DNA"/>
</dbReference>
<dbReference type="RefSeq" id="WP_005169189.1">
    <property type="nucleotide sequence ID" value="NC_008800.1"/>
</dbReference>
<dbReference type="RefSeq" id="YP_001006608.1">
    <property type="nucleotide sequence ID" value="NC_008800.1"/>
</dbReference>
<dbReference type="SMR" id="A1JRI2"/>
<dbReference type="KEGG" id="yen:YE2389"/>
<dbReference type="PATRIC" id="fig|393305.7.peg.2543"/>
<dbReference type="eggNOG" id="COG1121">
    <property type="taxonomic scope" value="Bacteria"/>
</dbReference>
<dbReference type="HOGENOM" id="CLU_000604_1_11_6"/>
<dbReference type="OrthoDB" id="9780942at2"/>
<dbReference type="Proteomes" id="UP000000642">
    <property type="component" value="Chromosome"/>
</dbReference>
<dbReference type="GO" id="GO:0005886">
    <property type="term" value="C:plasma membrane"/>
    <property type="evidence" value="ECO:0007669"/>
    <property type="project" value="UniProtKB-SubCell"/>
</dbReference>
<dbReference type="GO" id="GO:0015633">
    <property type="term" value="F:ABC-type zinc transporter activity"/>
    <property type="evidence" value="ECO:0007669"/>
    <property type="project" value="UniProtKB-EC"/>
</dbReference>
<dbReference type="GO" id="GO:0005524">
    <property type="term" value="F:ATP binding"/>
    <property type="evidence" value="ECO:0007669"/>
    <property type="project" value="UniProtKB-KW"/>
</dbReference>
<dbReference type="GO" id="GO:0016887">
    <property type="term" value="F:ATP hydrolysis activity"/>
    <property type="evidence" value="ECO:0007669"/>
    <property type="project" value="InterPro"/>
</dbReference>
<dbReference type="GO" id="GO:0010043">
    <property type="term" value="P:response to zinc ion"/>
    <property type="evidence" value="ECO:0007669"/>
    <property type="project" value="TreeGrafter"/>
</dbReference>
<dbReference type="CDD" id="cd03235">
    <property type="entry name" value="ABC_Metallic_Cations"/>
    <property type="match status" value="1"/>
</dbReference>
<dbReference type="FunFam" id="3.40.50.300:FF:000392">
    <property type="entry name" value="Zinc import ATP-binding protein ZnuC"/>
    <property type="match status" value="1"/>
</dbReference>
<dbReference type="Gene3D" id="3.40.50.300">
    <property type="entry name" value="P-loop containing nucleotide triphosphate hydrolases"/>
    <property type="match status" value="1"/>
</dbReference>
<dbReference type="InterPro" id="IPR003593">
    <property type="entry name" value="AAA+_ATPase"/>
</dbReference>
<dbReference type="InterPro" id="IPR003439">
    <property type="entry name" value="ABC_transporter-like_ATP-bd"/>
</dbReference>
<dbReference type="InterPro" id="IPR050153">
    <property type="entry name" value="Metal_Ion_Import_ABC"/>
</dbReference>
<dbReference type="InterPro" id="IPR027417">
    <property type="entry name" value="P-loop_NTPase"/>
</dbReference>
<dbReference type="NCBIfam" id="NF007090">
    <property type="entry name" value="PRK09544.1"/>
    <property type="match status" value="1"/>
</dbReference>
<dbReference type="PANTHER" id="PTHR42734">
    <property type="entry name" value="METAL TRANSPORT SYSTEM ATP-BINDING PROTEIN TM_0124-RELATED"/>
    <property type="match status" value="1"/>
</dbReference>
<dbReference type="PANTHER" id="PTHR42734:SF9">
    <property type="entry name" value="ZINC IMPORT ATP-BINDING PROTEIN ZNUC"/>
    <property type="match status" value="1"/>
</dbReference>
<dbReference type="Pfam" id="PF00005">
    <property type="entry name" value="ABC_tran"/>
    <property type="match status" value="1"/>
</dbReference>
<dbReference type="SMART" id="SM00382">
    <property type="entry name" value="AAA"/>
    <property type="match status" value="1"/>
</dbReference>
<dbReference type="SUPFAM" id="SSF52540">
    <property type="entry name" value="P-loop containing nucleoside triphosphate hydrolases"/>
    <property type="match status" value="1"/>
</dbReference>
<dbReference type="PROSITE" id="PS50893">
    <property type="entry name" value="ABC_TRANSPORTER_2"/>
    <property type="match status" value="1"/>
</dbReference>
<dbReference type="PROSITE" id="PS51298">
    <property type="entry name" value="ZNUC"/>
    <property type="match status" value="1"/>
</dbReference>
<sequence>MSTLVTLNKISVTFGSRRVLNDISLSLRPGRILTLLGPNGAGKSTLVRVVLGLIAPTSGSIIREPGLRIGYVPQKLHLDTTLPLTVSRFMRLKPGVRKADILPALKRVHAAHLLDQPMQKLSGGENQRVLLARALLNRPQLLVLDEPTQGVDVNGQLALYDLIEQLRRELGCAVLMVSHDLHLVMAKTDEVLCLNQHICCSGAPEVVSTHPEFIAMFGQRGAEQLAVYRHHHNHRHDLHGKIILKNSGSRGA</sequence>
<protein>
    <recommendedName>
        <fullName evidence="1">Zinc import ATP-binding protein ZnuC</fullName>
        <ecNumber evidence="1">7.2.2.20</ecNumber>
    </recommendedName>
</protein>
<feature type="chain" id="PRO_0000281568" description="Zinc import ATP-binding protein ZnuC">
    <location>
        <begin position="1"/>
        <end position="252"/>
    </location>
</feature>
<feature type="domain" description="ABC transporter" evidence="1">
    <location>
        <begin position="5"/>
        <end position="220"/>
    </location>
</feature>
<feature type="binding site" evidence="1">
    <location>
        <begin position="37"/>
        <end position="44"/>
    </location>
    <ligand>
        <name>ATP</name>
        <dbReference type="ChEBI" id="CHEBI:30616"/>
    </ligand>
</feature>
<name>ZNUC_YERE8</name>
<organism>
    <name type="scientific">Yersinia enterocolitica serotype O:8 / biotype 1B (strain NCTC 13174 / 8081)</name>
    <dbReference type="NCBI Taxonomy" id="393305"/>
    <lineage>
        <taxon>Bacteria</taxon>
        <taxon>Pseudomonadati</taxon>
        <taxon>Pseudomonadota</taxon>
        <taxon>Gammaproteobacteria</taxon>
        <taxon>Enterobacterales</taxon>
        <taxon>Yersiniaceae</taxon>
        <taxon>Yersinia</taxon>
    </lineage>
</organism>
<evidence type="ECO:0000255" key="1">
    <source>
        <dbReference type="HAMAP-Rule" id="MF_01725"/>
    </source>
</evidence>
<keyword id="KW-0067">ATP-binding</keyword>
<keyword id="KW-0997">Cell inner membrane</keyword>
<keyword id="KW-1003">Cell membrane</keyword>
<keyword id="KW-0406">Ion transport</keyword>
<keyword id="KW-0472">Membrane</keyword>
<keyword id="KW-0547">Nucleotide-binding</keyword>
<keyword id="KW-1278">Translocase</keyword>
<keyword id="KW-0813">Transport</keyword>
<keyword id="KW-0862">Zinc</keyword>
<keyword id="KW-0864">Zinc transport</keyword>
<accession>A1JRI2</accession>